<reference key="1">
    <citation type="journal article" date="2003" name="Proc. Natl. Acad. Sci. U.S.A.">
        <title>The complete genome sequence of Mycobacterium bovis.</title>
        <authorList>
            <person name="Garnier T."/>
            <person name="Eiglmeier K."/>
            <person name="Camus J.-C."/>
            <person name="Medina N."/>
            <person name="Mansoor H."/>
            <person name="Pryor M."/>
            <person name="Duthoy S."/>
            <person name="Grondin S."/>
            <person name="Lacroix C."/>
            <person name="Monsempe C."/>
            <person name="Simon S."/>
            <person name="Harris B."/>
            <person name="Atkin R."/>
            <person name="Doggett J."/>
            <person name="Mayes R."/>
            <person name="Keating L."/>
            <person name="Wheeler P.R."/>
            <person name="Parkhill J."/>
            <person name="Barrell B.G."/>
            <person name="Cole S.T."/>
            <person name="Gordon S.V."/>
            <person name="Hewinson R.G."/>
        </authorList>
    </citation>
    <scope>NUCLEOTIDE SEQUENCE [LARGE SCALE GENOMIC DNA]</scope>
    <source>
        <strain>ATCC BAA-935 / AF2122/97</strain>
    </source>
</reference>
<reference key="2">
    <citation type="journal article" date="2017" name="Genome Announc.">
        <title>Updated reference genome sequence and annotation of Mycobacterium bovis AF2122/97.</title>
        <authorList>
            <person name="Malone K.M."/>
            <person name="Farrell D."/>
            <person name="Stuber T.P."/>
            <person name="Schubert O.T."/>
            <person name="Aebersold R."/>
            <person name="Robbe-Austerman S."/>
            <person name="Gordon S.V."/>
        </authorList>
    </citation>
    <scope>NUCLEOTIDE SEQUENCE [LARGE SCALE GENOMIC DNA]</scope>
    <scope>GENOME REANNOTATION</scope>
    <source>
        <strain>ATCC BAA-935 / AF2122/97</strain>
    </source>
</reference>
<proteinExistence type="predicted"/>
<feature type="chain" id="PRO_0000104051" description="Uncharacterized protein Mb2600">
    <location>
        <begin position="1"/>
        <end position="129"/>
    </location>
</feature>
<protein>
    <recommendedName>
        <fullName>Uncharacterized protein Mb2600</fullName>
    </recommendedName>
</protein>
<sequence length="129" mass="14264">MATWDDVARIVGGLPLTAEQAPHDWRVGRKLLAWERPLRKSDREALTRAGSEPPSGDIVGVRVSDEGVKFALIADEPGVYFTTPHFDGYPAVLVRLAEIEVRDLEELITEAWLMQAPKQLVQAFLANSG</sequence>
<gene>
    <name type="ordered locus">BQ2027_MB2600</name>
</gene>
<keyword id="KW-1185">Reference proteome</keyword>
<accession>P65014</accession>
<accession>A0A1R3Y205</accession>
<accession>Q50651</accession>
<accession>X2BL39</accession>
<dbReference type="EMBL" id="LT708304">
    <property type="protein sequence ID" value="SIU01218.1"/>
    <property type="molecule type" value="Genomic_DNA"/>
</dbReference>
<dbReference type="RefSeq" id="NP_856246.1">
    <property type="nucleotide sequence ID" value="NC_002945.3"/>
</dbReference>
<dbReference type="RefSeq" id="WP_003413336.1">
    <property type="nucleotide sequence ID" value="NC_002945.4"/>
</dbReference>
<dbReference type="SMR" id="P65014"/>
<dbReference type="KEGG" id="mbo:BQ2027_MB2600"/>
<dbReference type="PATRIC" id="fig|233413.5.peg.2859"/>
<dbReference type="Proteomes" id="UP000001419">
    <property type="component" value="Chromosome"/>
</dbReference>
<organism>
    <name type="scientific">Mycobacterium bovis (strain ATCC BAA-935 / AF2122/97)</name>
    <dbReference type="NCBI Taxonomy" id="233413"/>
    <lineage>
        <taxon>Bacteria</taxon>
        <taxon>Bacillati</taxon>
        <taxon>Actinomycetota</taxon>
        <taxon>Actinomycetes</taxon>
        <taxon>Mycobacteriales</taxon>
        <taxon>Mycobacteriaceae</taxon>
        <taxon>Mycobacterium</taxon>
        <taxon>Mycobacterium tuberculosis complex</taxon>
    </lineage>
</organism>
<name>Y2600_MYCBO</name>